<comment type="function">
    <text evidence="1">Involved in the regulation of the intracellular balance of NAD and NADP, and is a key enzyme in the biosynthesis of NADP. Catalyzes specifically the phosphorylation on 2'-hydroxyl of the adenosine moiety of NAD to yield NADP.</text>
</comment>
<comment type="catalytic activity">
    <reaction evidence="1">
        <text>NAD(+) + ATP = ADP + NADP(+) + H(+)</text>
        <dbReference type="Rhea" id="RHEA:18629"/>
        <dbReference type="ChEBI" id="CHEBI:15378"/>
        <dbReference type="ChEBI" id="CHEBI:30616"/>
        <dbReference type="ChEBI" id="CHEBI:57540"/>
        <dbReference type="ChEBI" id="CHEBI:58349"/>
        <dbReference type="ChEBI" id="CHEBI:456216"/>
        <dbReference type="EC" id="2.7.1.23"/>
    </reaction>
</comment>
<comment type="cofactor">
    <cofactor evidence="1">
        <name>a divalent metal cation</name>
        <dbReference type="ChEBI" id="CHEBI:60240"/>
    </cofactor>
</comment>
<comment type="subcellular location">
    <subcellularLocation>
        <location evidence="1">Cytoplasm</location>
    </subcellularLocation>
</comment>
<comment type="similarity">
    <text evidence="1">Belongs to the NAD kinase family.</text>
</comment>
<comment type="sequence caution" evidence="2">
    <conflict type="erroneous initiation">
        <sequence resource="EMBL-CDS" id="AAX66588"/>
    </conflict>
    <text>Extended N-terminus.</text>
</comment>
<protein>
    <recommendedName>
        <fullName evidence="1">NAD kinase</fullName>
        <ecNumber evidence="1">2.7.1.23</ecNumber>
    </recommendedName>
    <alternativeName>
        <fullName evidence="1">ATP-dependent NAD kinase</fullName>
    </alternativeName>
</protein>
<sequence>MNNHFKCIGIVGHPRHPTALTTHEMLYRWLCDQGYEVIVEQQIAHELQLKNVPTGTLAKIGQQADLAVVVGGDGNMLGAARTLARYDINVIGINRGNLGFLTDLDPDNALQQLSDVLEGRYISEKRFLLEAQVCQQERQKRISTAINEVVLHPGKVAHMIEFEVYIDETFAFSQRSDGLIISTPTGSTAYSLSAGGPILTPSLDAITLVPMFPHTLSARPLVINSSSTIRLRFSHRRSDLEISCDSQIALPIQEGEDVLIRRCDYHLNLIHPKDYSYFNTLSTKLGWSKKLF</sequence>
<evidence type="ECO:0000255" key="1">
    <source>
        <dbReference type="HAMAP-Rule" id="MF_00361"/>
    </source>
</evidence>
<evidence type="ECO:0000305" key="2"/>
<feature type="chain" id="PRO_0000229685" description="NAD kinase">
    <location>
        <begin position="1"/>
        <end position="292"/>
    </location>
</feature>
<feature type="active site" description="Proton acceptor" evidence="1">
    <location>
        <position position="73"/>
    </location>
</feature>
<feature type="binding site" evidence="1">
    <location>
        <begin position="73"/>
        <end position="74"/>
    </location>
    <ligand>
        <name>NAD(+)</name>
        <dbReference type="ChEBI" id="CHEBI:57540"/>
    </ligand>
</feature>
<feature type="binding site" evidence="1">
    <location>
        <begin position="147"/>
        <end position="148"/>
    </location>
    <ligand>
        <name>NAD(+)</name>
        <dbReference type="ChEBI" id="CHEBI:57540"/>
    </ligand>
</feature>
<feature type="binding site" evidence="1">
    <location>
        <position position="158"/>
    </location>
    <ligand>
        <name>NAD(+)</name>
        <dbReference type="ChEBI" id="CHEBI:57540"/>
    </ligand>
</feature>
<feature type="binding site" evidence="1">
    <location>
        <position position="175"/>
    </location>
    <ligand>
        <name>NAD(+)</name>
        <dbReference type="ChEBI" id="CHEBI:57540"/>
    </ligand>
</feature>
<feature type="binding site" evidence="1">
    <location>
        <position position="177"/>
    </location>
    <ligand>
        <name>NAD(+)</name>
        <dbReference type="ChEBI" id="CHEBI:57540"/>
    </ligand>
</feature>
<feature type="binding site" evidence="1">
    <location>
        <begin position="188"/>
        <end position="193"/>
    </location>
    <ligand>
        <name>NAD(+)</name>
        <dbReference type="ChEBI" id="CHEBI:57540"/>
    </ligand>
</feature>
<feature type="binding site" evidence="1">
    <location>
        <position position="247"/>
    </location>
    <ligand>
        <name>NAD(+)</name>
        <dbReference type="ChEBI" id="CHEBI:57540"/>
    </ligand>
</feature>
<reference key="1">
    <citation type="journal article" date="2005" name="Nucleic Acids Res.">
        <title>The genome sequence of Salmonella enterica serovar Choleraesuis, a highly invasive and resistant zoonotic pathogen.</title>
        <authorList>
            <person name="Chiu C.-H."/>
            <person name="Tang P."/>
            <person name="Chu C."/>
            <person name="Hu S."/>
            <person name="Bao Q."/>
            <person name="Yu J."/>
            <person name="Chou Y.-Y."/>
            <person name="Wang H.-S."/>
            <person name="Lee Y.-S."/>
        </authorList>
    </citation>
    <scope>NUCLEOTIDE SEQUENCE [LARGE SCALE GENOMIC DNA]</scope>
    <source>
        <strain>SC-B67</strain>
    </source>
</reference>
<proteinExistence type="inferred from homology"/>
<accession>Q57L24</accession>
<organism>
    <name type="scientific">Salmonella choleraesuis (strain SC-B67)</name>
    <dbReference type="NCBI Taxonomy" id="321314"/>
    <lineage>
        <taxon>Bacteria</taxon>
        <taxon>Pseudomonadati</taxon>
        <taxon>Pseudomonadota</taxon>
        <taxon>Gammaproteobacteria</taxon>
        <taxon>Enterobacterales</taxon>
        <taxon>Enterobacteriaceae</taxon>
        <taxon>Salmonella</taxon>
    </lineage>
</organism>
<dbReference type="EC" id="2.7.1.23" evidence="1"/>
<dbReference type="EMBL" id="AE017220">
    <property type="protein sequence ID" value="AAX66588.1"/>
    <property type="status" value="ALT_INIT"/>
    <property type="molecule type" value="Genomic_DNA"/>
</dbReference>
<dbReference type="RefSeq" id="WP_011264359.1">
    <property type="nucleotide sequence ID" value="NC_006905.1"/>
</dbReference>
<dbReference type="SMR" id="Q57L24"/>
<dbReference type="KEGG" id="sec:SCH_2682"/>
<dbReference type="HOGENOM" id="CLU_037411_0_0_6"/>
<dbReference type="Proteomes" id="UP000000538">
    <property type="component" value="Chromosome"/>
</dbReference>
<dbReference type="GO" id="GO:0005737">
    <property type="term" value="C:cytoplasm"/>
    <property type="evidence" value="ECO:0007669"/>
    <property type="project" value="UniProtKB-SubCell"/>
</dbReference>
<dbReference type="GO" id="GO:0005524">
    <property type="term" value="F:ATP binding"/>
    <property type="evidence" value="ECO:0007669"/>
    <property type="project" value="UniProtKB-KW"/>
</dbReference>
<dbReference type="GO" id="GO:0046872">
    <property type="term" value="F:metal ion binding"/>
    <property type="evidence" value="ECO:0007669"/>
    <property type="project" value="UniProtKB-UniRule"/>
</dbReference>
<dbReference type="GO" id="GO:0051287">
    <property type="term" value="F:NAD binding"/>
    <property type="evidence" value="ECO:0007669"/>
    <property type="project" value="UniProtKB-ARBA"/>
</dbReference>
<dbReference type="GO" id="GO:0003951">
    <property type="term" value="F:NAD+ kinase activity"/>
    <property type="evidence" value="ECO:0007669"/>
    <property type="project" value="UniProtKB-UniRule"/>
</dbReference>
<dbReference type="GO" id="GO:0019674">
    <property type="term" value="P:NAD metabolic process"/>
    <property type="evidence" value="ECO:0007669"/>
    <property type="project" value="InterPro"/>
</dbReference>
<dbReference type="GO" id="GO:0006741">
    <property type="term" value="P:NADP biosynthetic process"/>
    <property type="evidence" value="ECO:0007669"/>
    <property type="project" value="UniProtKB-UniRule"/>
</dbReference>
<dbReference type="FunFam" id="2.60.200.30:FF:000001">
    <property type="entry name" value="NAD kinase"/>
    <property type="match status" value="1"/>
</dbReference>
<dbReference type="FunFam" id="3.40.50.10330:FF:000004">
    <property type="entry name" value="NAD kinase"/>
    <property type="match status" value="1"/>
</dbReference>
<dbReference type="Gene3D" id="3.40.50.10330">
    <property type="entry name" value="Probable inorganic polyphosphate/atp-NAD kinase, domain 1"/>
    <property type="match status" value="1"/>
</dbReference>
<dbReference type="Gene3D" id="2.60.200.30">
    <property type="entry name" value="Probable inorganic polyphosphate/atp-NAD kinase, domain 2"/>
    <property type="match status" value="1"/>
</dbReference>
<dbReference type="HAMAP" id="MF_00361">
    <property type="entry name" value="NAD_kinase"/>
    <property type="match status" value="1"/>
</dbReference>
<dbReference type="InterPro" id="IPR017438">
    <property type="entry name" value="ATP-NAD_kinase_N"/>
</dbReference>
<dbReference type="InterPro" id="IPR017437">
    <property type="entry name" value="ATP-NAD_kinase_PpnK-typ_C"/>
</dbReference>
<dbReference type="InterPro" id="IPR016064">
    <property type="entry name" value="NAD/diacylglycerol_kinase_sf"/>
</dbReference>
<dbReference type="InterPro" id="IPR002504">
    <property type="entry name" value="NADK"/>
</dbReference>
<dbReference type="NCBIfam" id="NF002306">
    <property type="entry name" value="PRK01231.1"/>
    <property type="match status" value="1"/>
</dbReference>
<dbReference type="NCBIfam" id="NF002893">
    <property type="entry name" value="PRK03378.1"/>
    <property type="match status" value="1"/>
</dbReference>
<dbReference type="PANTHER" id="PTHR20275">
    <property type="entry name" value="NAD KINASE"/>
    <property type="match status" value="1"/>
</dbReference>
<dbReference type="PANTHER" id="PTHR20275:SF0">
    <property type="entry name" value="NAD KINASE"/>
    <property type="match status" value="1"/>
</dbReference>
<dbReference type="Pfam" id="PF01513">
    <property type="entry name" value="NAD_kinase"/>
    <property type="match status" value="1"/>
</dbReference>
<dbReference type="Pfam" id="PF20143">
    <property type="entry name" value="NAD_kinase_C"/>
    <property type="match status" value="1"/>
</dbReference>
<dbReference type="SUPFAM" id="SSF111331">
    <property type="entry name" value="NAD kinase/diacylglycerol kinase-like"/>
    <property type="match status" value="1"/>
</dbReference>
<name>NADK_SALCH</name>
<keyword id="KW-0067">ATP-binding</keyword>
<keyword id="KW-0963">Cytoplasm</keyword>
<keyword id="KW-0418">Kinase</keyword>
<keyword id="KW-0520">NAD</keyword>
<keyword id="KW-0521">NADP</keyword>
<keyword id="KW-0547">Nucleotide-binding</keyword>
<keyword id="KW-0808">Transferase</keyword>
<gene>
    <name evidence="1" type="primary">nadK</name>
    <name type="ordered locus">SCH_2682</name>
</gene>